<proteinExistence type="evidence at transcript level"/>
<keyword id="KW-0131">Cell cycle</keyword>
<keyword id="KW-0132">Cell division</keyword>
<keyword id="KW-0137">Centromere</keyword>
<keyword id="KW-0158">Chromosome</keyword>
<keyword id="KW-0175">Coiled coil</keyword>
<keyword id="KW-0995">Kinetochore</keyword>
<keyword id="KW-0498">Mitosis</keyword>
<keyword id="KW-0539">Nucleus</keyword>
<keyword id="KW-1185">Reference proteome</keyword>
<accession>Q7ZW63</accession>
<evidence type="ECO:0000250" key="1"/>
<evidence type="ECO:0000255" key="2"/>
<evidence type="ECO:0000305" key="3"/>
<feature type="chain" id="PRO_0000249817" description="Kinetochore protein Nuf2">
    <location>
        <begin position="1"/>
        <end position="454"/>
    </location>
</feature>
<feature type="coiled-coil region" evidence="2">
    <location>
        <begin position="143"/>
        <end position="347"/>
    </location>
</feature>
<feature type="coiled-coil region" evidence="2">
    <location>
        <begin position="375"/>
        <end position="439"/>
    </location>
</feature>
<protein>
    <recommendedName>
        <fullName>Kinetochore protein Nuf2</fullName>
    </recommendedName>
    <alternativeName>
        <fullName>Cell division cycle-associated protein 1</fullName>
    </alternativeName>
</protein>
<comment type="function">
    <text evidence="1">Acts as a component of the essential kinetochore-associated NDC80 complex, which is required for chromosome segregation and spindle checkpoint activity.</text>
</comment>
<comment type="subunit">
    <text evidence="1">Component of the NDC80 complex, which is composed of ndc80, cdca1, spbc24 and spbc25.</text>
</comment>
<comment type="subcellular location">
    <subcellularLocation>
        <location evidence="1">Nucleus</location>
    </subcellularLocation>
    <subcellularLocation>
        <location evidence="1">Chromosome</location>
        <location evidence="1">Centromere</location>
        <location evidence="1">Kinetochore</location>
    </subcellularLocation>
    <text evidence="1">Localizes to kinetochores from late prophase to anaphase.</text>
</comment>
<comment type="similarity">
    <text evidence="3">Belongs to the NUF2 family.</text>
</comment>
<sequence>MSENTFPVYKVDVIVQFYRTEVLTGQESKHFTKNDLTPTPKPESVQRLYMRILQLLFRFRPECHYTVPLSENIQYPMLYESFAPIMSVYMRMCQFLPVCRVYDFSLSDLLNPKTKRTITILSAIQNFLHFRKQRLEITAAHQQSFRADMDRLQAYTREIKEAEKKIEKLTTIPPEQQAEAKELASALAELSTNTQHEYQDVSAINEKVAQFKTEIAELSQKLTQRKVEVATLKDEISKLKSQIVESPEELKNEMERMRETAKNIKMSKELADERLVELQMLVQCASQVEAEIQILLKQLQDLQSSMSKTKQRKEEVQSLEVMNESLQKELKSLSSEEAQLKRALTMKLDKESKQQIRRQKKKEVKDQQVKNIYGQYDKMHQKRQEIVKKIEECNRETKQFKEKMQALRENCNQRTQKAQEIYERLLTTLEQYHKRIEKILVETNADALKMKSHF</sequence>
<dbReference type="EMBL" id="BC050181">
    <property type="protein sequence ID" value="AAH50181.1"/>
    <property type="molecule type" value="mRNA"/>
</dbReference>
<dbReference type="RefSeq" id="NP_956604.1">
    <property type="nucleotide sequence ID" value="NM_200310.1"/>
</dbReference>
<dbReference type="RefSeq" id="XP_005155728.1">
    <property type="nucleotide sequence ID" value="XM_005155671.4"/>
</dbReference>
<dbReference type="SMR" id="Q7ZW63"/>
<dbReference type="FunCoup" id="Q7ZW63">
    <property type="interactions" value="1490"/>
</dbReference>
<dbReference type="STRING" id="7955.ENSDARP00000040811"/>
<dbReference type="PaxDb" id="7955-ENSDARP00000040811"/>
<dbReference type="Ensembl" id="ENSDART00000040812">
    <property type="protein sequence ID" value="ENSDARP00000040811"/>
    <property type="gene ID" value="ENSDARG00000034624"/>
</dbReference>
<dbReference type="GeneID" id="393280"/>
<dbReference type="KEGG" id="dre:393280"/>
<dbReference type="AGR" id="ZFIN:ZDB-GENE-040426-1121"/>
<dbReference type="CTD" id="83540"/>
<dbReference type="ZFIN" id="ZDB-GENE-040426-1121">
    <property type="gene designation" value="nuf2"/>
</dbReference>
<dbReference type="eggNOG" id="KOG4438">
    <property type="taxonomic scope" value="Eukaryota"/>
</dbReference>
<dbReference type="InParanoid" id="Q7ZW63"/>
<dbReference type="OMA" id="YLKMEAH"/>
<dbReference type="OrthoDB" id="8194677at2759"/>
<dbReference type="PhylomeDB" id="Q7ZW63"/>
<dbReference type="TreeFam" id="TF101067"/>
<dbReference type="PRO" id="PR:Q7ZW63"/>
<dbReference type="Proteomes" id="UP000000437">
    <property type="component" value="Chromosome 11"/>
</dbReference>
<dbReference type="Bgee" id="ENSDARG00000034624">
    <property type="expression patterns" value="Expressed in testis and 28 other cell types or tissues"/>
</dbReference>
<dbReference type="ExpressionAtlas" id="Q7ZW63">
    <property type="expression patterns" value="baseline and differential"/>
</dbReference>
<dbReference type="GO" id="GO:0031262">
    <property type="term" value="C:Ndc80 complex"/>
    <property type="evidence" value="ECO:0000250"/>
    <property type="project" value="UniProtKB"/>
</dbReference>
<dbReference type="GO" id="GO:0005634">
    <property type="term" value="C:nucleus"/>
    <property type="evidence" value="ECO:0007669"/>
    <property type="project" value="UniProtKB-SubCell"/>
</dbReference>
<dbReference type="GO" id="GO:0008017">
    <property type="term" value="F:microtubule binding"/>
    <property type="evidence" value="ECO:0000250"/>
    <property type="project" value="UniProtKB"/>
</dbReference>
<dbReference type="GO" id="GO:0044877">
    <property type="term" value="F:protein-containing complex binding"/>
    <property type="evidence" value="ECO:0000318"/>
    <property type="project" value="GO_Central"/>
</dbReference>
<dbReference type="GO" id="GO:0051315">
    <property type="term" value="P:attachment of mitotic spindle microtubules to kinetochore"/>
    <property type="evidence" value="ECO:0000318"/>
    <property type="project" value="GO_Central"/>
</dbReference>
<dbReference type="GO" id="GO:0051301">
    <property type="term" value="P:cell division"/>
    <property type="evidence" value="ECO:0007669"/>
    <property type="project" value="UniProtKB-KW"/>
</dbReference>
<dbReference type="GO" id="GO:0007507">
    <property type="term" value="P:heart development"/>
    <property type="evidence" value="ECO:0000315"/>
    <property type="project" value="ZFIN"/>
</dbReference>
<dbReference type="GO" id="GO:0051383">
    <property type="term" value="P:kinetochore organization"/>
    <property type="evidence" value="ECO:0000318"/>
    <property type="project" value="GO_Central"/>
</dbReference>
<dbReference type="GO" id="GO:0045132">
    <property type="term" value="P:meiotic chromosome segregation"/>
    <property type="evidence" value="ECO:0000318"/>
    <property type="project" value="GO_Central"/>
</dbReference>
<dbReference type="GO" id="GO:0007052">
    <property type="term" value="P:mitotic spindle organization"/>
    <property type="evidence" value="ECO:0000318"/>
    <property type="project" value="GO_Central"/>
</dbReference>
<dbReference type="FunFam" id="1.10.418.60:FF:000007">
    <property type="entry name" value="NDC80 kinetochore complex component NUF2"/>
    <property type="match status" value="1"/>
</dbReference>
<dbReference type="Gene3D" id="1.20.5.170">
    <property type="match status" value="1"/>
</dbReference>
<dbReference type="Gene3D" id="1.10.418.60">
    <property type="entry name" value="Ncd80 complex, Nuf2 subunit"/>
    <property type="match status" value="1"/>
</dbReference>
<dbReference type="InterPro" id="IPR005549">
    <property type="entry name" value="Kinetochore_Nuf2_N"/>
</dbReference>
<dbReference type="InterPro" id="IPR038275">
    <property type="entry name" value="Nuf2_N_sf"/>
</dbReference>
<dbReference type="PANTHER" id="PTHR21650:SF2">
    <property type="entry name" value="KINETOCHORE PROTEIN NUF2"/>
    <property type="match status" value="1"/>
</dbReference>
<dbReference type="PANTHER" id="PTHR21650">
    <property type="entry name" value="MEMBRALIN/KINETOCHORE PROTEIN NUF2"/>
    <property type="match status" value="1"/>
</dbReference>
<dbReference type="Pfam" id="PF03800">
    <property type="entry name" value="Nuf2"/>
    <property type="match status" value="1"/>
</dbReference>
<organism>
    <name type="scientific">Danio rerio</name>
    <name type="common">Zebrafish</name>
    <name type="synonym">Brachydanio rerio</name>
    <dbReference type="NCBI Taxonomy" id="7955"/>
    <lineage>
        <taxon>Eukaryota</taxon>
        <taxon>Metazoa</taxon>
        <taxon>Chordata</taxon>
        <taxon>Craniata</taxon>
        <taxon>Vertebrata</taxon>
        <taxon>Euteleostomi</taxon>
        <taxon>Actinopterygii</taxon>
        <taxon>Neopterygii</taxon>
        <taxon>Teleostei</taxon>
        <taxon>Ostariophysi</taxon>
        <taxon>Cypriniformes</taxon>
        <taxon>Danionidae</taxon>
        <taxon>Danioninae</taxon>
        <taxon>Danio</taxon>
    </lineage>
</organism>
<gene>
    <name type="primary">nuf2</name>
    <name type="synonym">cdca1</name>
    <name type="ORF">zgc:56708</name>
</gene>
<name>NUF2_DANRE</name>
<reference key="1">
    <citation type="submission" date="2003-04" db="EMBL/GenBank/DDBJ databases">
        <authorList>
            <consortium name="NIH - Zebrafish Gene Collection (ZGC) project"/>
        </authorList>
    </citation>
    <scope>NUCLEOTIDE SEQUENCE [LARGE SCALE MRNA]</scope>
    <source>
        <strain>SJD</strain>
    </source>
</reference>